<dbReference type="EMBL" id="X16984">
    <property type="protein sequence ID" value="CAA34853.1"/>
    <property type="molecule type" value="Genomic_DNA"/>
</dbReference>
<dbReference type="VEuPathDB" id="FungiDB:CCR75_004536"/>
<dbReference type="GO" id="GO:0030435">
    <property type="term" value="P:sporulation resulting in formation of a cellular spore"/>
    <property type="evidence" value="ECO:0007669"/>
    <property type="project" value="UniProtKB-KW"/>
</dbReference>
<organism>
    <name type="scientific">Bremia lactucae</name>
    <name type="common">Lettuce downy mildew</name>
    <dbReference type="NCBI Taxonomy" id="4779"/>
    <lineage>
        <taxon>Eukaryota</taxon>
        <taxon>Sar</taxon>
        <taxon>Stramenopiles</taxon>
        <taxon>Oomycota</taxon>
        <taxon>Peronosporales</taxon>
        <taxon>Peronosporaceae</taxon>
        <taxon>Bremia</taxon>
    </lineage>
</organism>
<comment type="function">
    <text>Could be a structural protein required for the infection process of B.lactucae.</text>
</comment>
<comment type="tissue specificity">
    <text>Germinating spores.</text>
</comment>
<reference key="1">
    <citation type="journal article" date="1990" name="Mol. Plant Microbe Interact.">
        <title>Highly abundant and stage-specific mRNAs in the obligate pathogen Bremia lactucae.</title>
        <authorList>
            <person name="Judelson H.S."/>
            <person name="Michelmore R.W."/>
        </authorList>
    </citation>
    <scope>NUCLEOTIDE SEQUENCE [GENOMIC DNA]</scope>
    <source>
        <strain>REGEL</strain>
        <tissue>Spore</tissue>
    </source>
</reference>
<gene>
    <name type="primary">HAM34</name>
</gene>
<protein>
    <recommendedName>
        <fullName>HAM34 protein</fullName>
    </recommendedName>
</protein>
<sequence length="173" mass="16479">MKFSQILVLAAIAVAAISAQDAAPATTPDTATATTPAAATTTTTTTTPAADAGTASTEQTTTAGPEAAGATNGTTTTPPADGTQTATAPLDATATEESSASGEMTPTVGTDTSDQVSDSTAAGPSTPEGSMTGTSTPKASDSSSSATDTTSGASHTTMAVACATVMTVGAYFL</sequence>
<keyword id="KW-0749">Sporulation</keyword>
<evidence type="ECO:0000256" key="1">
    <source>
        <dbReference type="SAM" id="MobiDB-lite"/>
    </source>
</evidence>
<accession>Q99074</accession>
<name>HA34_BRELC</name>
<proteinExistence type="evidence at transcript level"/>
<feature type="chain" id="PRO_0000083887" description="HAM34 protein">
    <location>
        <begin position="1"/>
        <end position="173"/>
    </location>
</feature>
<feature type="region of interest" description="Disordered" evidence="1">
    <location>
        <begin position="22"/>
        <end position="155"/>
    </location>
</feature>
<feature type="compositionally biased region" description="Low complexity" evidence="1">
    <location>
        <begin position="22"/>
        <end position="89"/>
    </location>
</feature>
<feature type="compositionally biased region" description="Polar residues" evidence="1">
    <location>
        <begin position="95"/>
        <end position="133"/>
    </location>
</feature>
<feature type="compositionally biased region" description="Low complexity" evidence="1">
    <location>
        <begin position="134"/>
        <end position="155"/>
    </location>
</feature>